<reference key="1">
    <citation type="journal article" date="1997" name="Nature">
        <title>The nucleotide sequence of Saccharomyces cerevisiae chromosome IX.</title>
        <authorList>
            <person name="Churcher C.M."/>
            <person name="Bowman S."/>
            <person name="Badcock K."/>
            <person name="Bankier A.T."/>
            <person name="Brown D."/>
            <person name="Chillingworth T."/>
            <person name="Connor R."/>
            <person name="Devlin K."/>
            <person name="Gentles S."/>
            <person name="Hamlin N."/>
            <person name="Harris D.E."/>
            <person name="Horsnell T."/>
            <person name="Hunt S."/>
            <person name="Jagels K."/>
            <person name="Jones M."/>
            <person name="Lye G."/>
            <person name="Moule S."/>
            <person name="Odell C."/>
            <person name="Pearson D."/>
            <person name="Rajandream M.A."/>
            <person name="Rice P."/>
            <person name="Rowley N."/>
            <person name="Skelton J."/>
            <person name="Smith V."/>
            <person name="Walsh S.V."/>
            <person name="Whitehead S."/>
            <person name="Barrell B.G."/>
        </authorList>
    </citation>
    <scope>NUCLEOTIDE SEQUENCE [LARGE SCALE GENOMIC DNA]</scope>
    <source>
        <strain>ATCC 204508 / S288c</strain>
    </source>
</reference>
<reference key="2">
    <citation type="journal article" date="2014" name="G3 (Bethesda)">
        <title>The reference genome sequence of Saccharomyces cerevisiae: Then and now.</title>
        <authorList>
            <person name="Engel S.R."/>
            <person name="Dietrich F.S."/>
            <person name="Fisk D.G."/>
            <person name="Binkley G."/>
            <person name="Balakrishnan R."/>
            <person name="Costanzo M.C."/>
            <person name="Dwight S.S."/>
            <person name="Hitz B.C."/>
            <person name="Karra K."/>
            <person name="Nash R.S."/>
            <person name="Weng S."/>
            <person name="Wong E.D."/>
            <person name="Lloyd P."/>
            <person name="Skrzypek M.S."/>
            <person name="Miyasato S.R."/>
            <person name="Simison M."/>
            <person name="Cherry J.M."/>
        </authorList>
    </citation>
    <scope>GENOME REANNOTATION</scope>
    <source>
        <strain>ATCC 204508 / S288c</strain>
    </source>
</reference>
<reference key="3">
    <citation type="journal article" date="2003" name="Nature">
        <title>Global analysis of protein expression in yeast.</title>
        <authorList>
            <person name="Ghaemmaghami S."/>
            <person name="Huh W.-K."/>
            <person name="Bower K."/>
            <person name="Howson R.W."/>
            <person name="Belle A."/>
            <person name="Dephoure N."/>
            <person name="O'Shea E.K."/>
            <person name="Weissman J.S."/>
        </authorList>
    </citation>
    <scope>LEVEL OF PROTEIN EXPRESSION [LARGE SCALE ANALYSIS]</scope>
</reference>
<reference key="4">
    <citation type="journal article" date="2011" name="PLoS ONE">
        <title>Comprehensive structural and substrate specificity classification of the Saccharomyces cerevisiae methyltransferome.</title>
        <authorList>
            <person name="Wlodarski T."/>
            <person name="Kutner J."/>
            <person name="Towpik J."/>
            <person name="Knizewski L."/>
            <person name="Rychlewski L."/>
            <person name="Kudlicki A."/>
            <person name="Rowicka M."/>
            <person name="Dziembowski A."/>
            <person name="Ginalski K."/>
        </authorList>
    </citation>
    <scope>IDENTIFICATION AS METHYLTRANSFERASE</scope>
    <scope>SAM-BINDING</scope>
</reference>
<reference key="5">
    <citation type="journal article" date="2014" name="Nucleic Acids Res.">
        <title>Identification of novel methyltransferases, Bmt5 and Bmt6, responsible for the m3U methylations of 25S rRNA in Saccharomyces cerevisiae.</title>
        <authorList>
            <person name="Sharma S."/>
            <person name="Yang J."/>
            <person name="Duttmann S."/>
            <person name="Watzinger P."/>
            <person name="Kotter P."/>
            <person name="Entian K.D."/>
        </authorList>
    </citation>
    <scope>FUNCTION</scope>
    <scope>CATALYTIC ACTIVITY</scope>
    <scope>SUBCELLULAR LOCATION</scope>
    <scope>SAM-BINDING</scope>
    <scope>MUTAGENESIS OF GLY-182</scope>
</reference>
<evidence type="ECO:0000256" key="1">
    <source>
        <dbReference type="SAM" id="MobiDB-lite"/>
    </source>
</evidence>
<evidence type="ECO:0000269" key="2">
    <source>
    </source>
</evidence>
<evidence type="ECO:0000269" key="3">
    <source>
    </source>
</evidence>
<evidence type="ECO:0000305" key="4"/>
<dbReference type="EC" id="2.1.1.313" evidence="3"/>
<dbReference type="EMBL" id="Z38125">
    <property type="protein sequence ID" value="CAA86285.1"/>
    <property type="molecule type" value="Genomic_DNA"/>
</dbReference>
<dbReference type="EMBL" id="BK006942">
    <property type="protein sequence ID" value="DAA08457.1"/>
    <property type="molecule type" value="Genomic_DNA"/>
</dbReference>
<dbReference type="PIR" id="S48477">
    <property type="entry name" value="S48477"/>
</dbReference>
<dbReference type="RefSeq" id="NP_012170.1">
    <property type="nucleotide sequence ID" value="NM_001179444.1"/>
</dbReference>
<dbReference type="BioGRID" id="34895">
    <property type="interactions" value="76"/>
</dbReference>
<dbReference type="DIP" id="DIP-5098N"/>
<dbReference type="FunCoup" id="P40493">
    <property type="interactions" value="294"/>
</dbReference>
<dbReference type="IntAct" id="P40493">
    <property type="interactions" value="26"/>
</dbReference>
<dbReference type="MINT" id="P40493"/>
<dbReference type="STRING" id="4932.YIL096C"/>
<dbReference type="iPTMnet" id="P40493"/>
<dbReference type="PaxDb" id="4932-YIL096C"/>
<dbReference type="PeptideAtlas" id="P40493"/>
<dbReference type="EnsemblFungi" id="YIL096C_mRNA">
    <property type="protein sequence ID" value="YIL096C"/>
    <property type="gene ID" value="YIL096C"/>
</dbReference>
<dbReference type="GeneID" id="854711"/>
<dbReference type="KEGG" id="sce:YIL096C"/>
<dbReference type="AGR" id="SGD:S000001358"/>
<dbReference type="SGD" id="S000001358">
    <property type="gene designation" value="BMT5"/>
</dbReference>
<dbReference type="VEuPathDB" id="FungiDB:YIL096C"/>
<dbReference type="eggNOG" id="KOG4174">
    <property type="taxonomic scope" value="Eukaryota"/>
</dbReference>
<dbReference type="GeneTree" id="ENSGT00940000160701"/>
<dbReference type="HOGENOM" id="CLU_035438_1_0_1"/>
<dbReference type="InParanoid" id="P40493"/>
<dbReference type="OMA" id="YPGYKHA"/>
<dbReference type="OrthoDB" id="273345at2759"/>
<dbReference type="BioCyc" id="MetaCyc:G3O-31355-MONOMER"/>
<dbReference type="BioCyc" id="YEAST:G3O-31355-MONOMER"/>
<dbReference type="BRENDA" id="2.1.1.313">
    <property type="organism ID" value="984"/>
</dbReference>
<dbReference type="BioGRID-ORCS" id="854711">
    <property type="hits" value="0 hits in 10 CRISPR screens"/>
</dbReference>
<dbReference type="PRO" id="PR:P40493"/>
<dbReference type="Proteomes" id="UP000002311">
    <property type="component" value="Chromosome IX"/>
</dbReference>
<dbReference type="RNAct" id="P40493">
    <property type="molecule type" value="protein"/>
</dbReference>
<dbReference type="GO" id="GO:0005737">
    <property type="term" value="C:cytoplasm"/>
    <property type="evidence" value="ECO:0000318"/>
    <property type="project" value="GO_Central"/>
</dbReference>
<dbReference type="GO" id="GO:0005730">
    <property type="term" value="C:nucleolus"/>
    <property type="evidence" value="ECO:0000314"/>
    <property type="project" value="SGD"/>
</dbReference>
<dbReference type="GO" id="GO:0005634">
    <property type="term" value="C:nucleus"/>
    <property type="evidence" value="ECO:0007005"/>
    <property type="project" value="SGD"/>
</dbReference>
<dbReference type="GO" id="GO:0070042">
    <property type="term" value="F:rRNA (uridine-N3-)-methyltransferase activity"/>
    <property type="evidence" value="ECO:0000315"/>
    <property type="project" value="SGD"/>
</dbReference>
<dbReference type="GO" id="GO:0008757">
    <property type="term" value="F:S-adenosylmethionine-dependent methyltransferase activity"/>
    <property type="evidence" value="ECO:0000314"/>
    <property type="project" value="SGD"/>
</dbReference>
<dbReference type="GO" id="GO:0070475">
    <property type="term" value="P:rRNA base methylation"/>
    <property type="evidence" value="ECO:0000315"/>
    <property type="project" value="SGD"/>
</dbReference>
<dbReference type="InterPro" id="IPR019446">
    <property type="entry name" value="BMT5-like"/>
</dbReference>
<dbReference type="PANTHER" id="PTHR11538:SF26">
    <property type="entry name" value="FERREDOXIN-FOLD ANTICODON-BINDING DOMAIN-CONTAINING PROTEIN 1"/>
    <property type="match status" value="1"/>
</dbReference>
<dbReference type="PANTHER" id="PTHR11538">
    <property type="entry name" value="PHENYLALANYL-TRNA SYNTHETASE"/>
    <property type="match status" value="1"/>
</dbReference>
<dbReference type="Pfam" id="PF10354">
    <property type="entry name" value="BMT5-like"/>
    <property type="match status" value="1"/>
</dbReference>
<comment type="function">
    <text evidence="3">S-adenosyl-L-methionine-dependent methyltransferase that specifically methylates the N(3) position of uridine 2634 (m3U2634) in 25S rRNA.</text>
</comment>
<comment type="catalytic activity">
    <reaction evidence="3">
        <text>uridine(2634) in 25S rRNA + S-adenosyl-L-methionine = N(3)-methyluridine(2634) in 25S rRNA + S-adenosyl-L-homocysteine + H(+)</text>
        <dbReference type="Rhea" id="RHEA:43188"/>
        <dbReference type="Rhea" id="RHEA-COMP:10395"/>
        <dbReference type="Rhea" id="RHEA-COMP:10396"/>
        <dbReference type="ChEBI" id="CHEBI:15378"/>
        <dbReference type="ChEBI" id="CHEBI:57856"/>
        <dbReference type="ChEBI" id="CHEBI:59789"/>
        <dbReference type="ChEBI" id="CHEBI:65315"/>
        <dbReference type="ChEBI" id="CHEBI:74502"/>
        <dbReference type="EC" id="2.1.1.313"/>
    </reaction>
</comment>
<comment type="subcellular location">
    <subcellularLocation>
        <location evidence="3">Nucleus</location>
        <location evidence="3">Nucleolus</location>
    </subcellularLocation>
</comment>
<comment type="miscellaneous">
    <text evidence="2">Present with 2960 molecules/cell in log phase SD medium.</text>
</comment>
<comment type="similarity">
    <text evidence="4">Belongs to the class I-like SAM-binding methyltransferase superfamily. BMT5 family.</text>
</comment>
<protein>
    <recommendedName>
        <fullName>25S rRNA (uridine(2634)-N(3))-methyltransferase</fullName>
        <ecNumber evidence="3">2.1.1.313</ecNumber>
    </recommendedName>
    <alternativeName>
        <fullName>Base methyltransferase of 25S RNA 5</fullName>
    </alternativeName>
</protein>
<proteinExistence type="evidence at protein level"/>
<organism>
    <name type="scientific">Saccharomyces cerevisiae (strain ATCC 204508 / S288c)</name>
    <name type="common">Baker's yeast</name>
    <dbReference type="NCBI Taxonomy" id="559292"/>
    <lineage>
        <taxon>Eukaryota</taxon>
        <taxon>Fungi</taxon>
        <taxon>Dikarya</taxon>
        <taxon>Ascomycota</taxon>
        <taxon>Saccharomycotina</taxon>
        <taxon>Saccharomycetes</taxon>
        <taxon>Saccharomycetales</taxon>
        <taxon>Saccharomycetaceae</taxon>
        <taxon>Saccharomyces</taxon>
    </lineage>
</organism>
<accession>P40493</accession>
<accession>D6VVJ1</accession>
<name>BMT5_YEAST</name>
<gene>
    <name type="primary">BMT5</name>
    <name type="ordered locus">YIL096C</name>
</gene>
<keyword id="KW-0489">Methyltransferase</keyword>
<keyword id="KW-0539">Nucleus</keyword>
<keyword id="KW-1185">Reference proteome</keyword>
<keyword id="KW-0698">rRNA processing</keyword>
<keyword id="KW-0949">S-adenosyl-L-methionine</keyword>
<keyword id="KW-0808">Transferase</keyword>
<sequence length="336" mass="39402">MARKLKGKIGSKGLKGALLRHKAKVKLVRNIESKQKHELRKKNSSANNKTVKRNQEFQKLNQGKVMPFEKDETLMLCGEGDFSFARSIVEQNYIESDNLIITSYDNSVNELKLKYPHTFEENYQYLKDLNIPIFFQIDVTKLVKSFKISKNNTWFKIINRLSDHRWGNKPLQNIVFNFPHNGKGIKDQERNIREHQDLIFNFFQNSLQLFNLINTKIQNDTLRYTQGYDLNEDTPQAKKLTAEGYGNIILSLFDGEPYDSWQIKLLAKKNGLTLSRSSKFQWENFPGYHHRRTNSEQDTTKPAKERDARFYIFSKYVSNSSKHNRKSKKDTDSDSD</sequence>
<feature type="chain" id="PRO_0000202971" description="25S rRNA (uridine(2634)-N(3))-methyltransferase">
    <location>
        <begin position="1"/>
        <end position="336"/>
    </location>
</feature>
<feature type="region of interest" description="Disordered" evidence="1">
    <location>
        <begin position="286"/>
        <end position="307"/>
    </location>
</feature>
<feature type="compositionally biased region" description="Basic and acidic residues" evidence="1">
    <location>
        <begin position="293"/>
        <end position="307"/>
    </location>
</feature>
<feature type="mutagenesis site" description="Abolishes methyltransferase activity." evidence="3">
    <original>G</original>
    <variation>R</variation>
    <location>
        <position position="182"/>
    </location>
</feature>